<reference key="1">
    <citation type="journal article" date="2000" name="Curr. Microbiol.">
        <title>Organization and sequence of histidine biosynthesis genes hisH, -A, -F, and -IE in Thermoanaerobacter ethanolicus.</title>
        <authorList>
            <person name="Erbeznik M."/>
            <person name="Strobel H.J."/>
            <person name="Dawson K.A."/>
        </authorList>
    </citation>
    <scope>NUCLEOTIDE SEQUENCE [GENOMIC DNA]</scope>
</reference>
<comment type="function">
    <text evidence="1">IGPS catalyzes the conversion of PRFAR and glutamine to IGP, AICAR and glutamate. The HisF subunit catalyzes the cyclization activity that produces IGP and AICAR from PRFAR using the ammonia provided by the HisH subunit (By similarity).</text>
</comment>
<comment type="catalytic activity">
    <reaction>
        <text>5-[(5-phospho-1-deoxy-D-ribulos-1-ylimino)methylamino]-1-(5-phospho-beta-D-ribosyl)imidazole-4-carboxamide + L-glutamine = D-erythro-1-(imidazol-4-yl)glycerol 3-phosphate + 5-amino-1-(5-phospho-beta-D-ribosyl)imidazole-4-carboxamide + L-glutamate + H(+)</text>
        <dbReference type="Rhea" id="RHEA:24793"/>
        <dbReference type="ChEBI" id="CHEBI:15378"/>
        <dbReference type="ChEBI" id="CHEBI:29985"/>
        <dbReference type="ChEBI" id="CHEBI:58278"/>
        <dbReference type="ChEBI" id="CHEBI:58359"/>
        <dbReference type="ChEBI" id="CHEBI:58475"/>
        <dbReference type="ChEBI" id="CHEBI:58525"/>
        <dbReference type="EC" id="4.3.2.10"/>
    </reaction>
</comment>
<comment type="pathway">
    <text>Amino-acid biosynthesis; L-histidine biosynthesis; L-histidine from 5-phospho-alpha-D-ribose 1-diphosphate: step 5/9.</text>
</comment>
<comment type="subunit">
    <text evidence="1">Heterodimer of HisH and HisF.</text>
</comment>
<comment type="subcellular location">
    <subcellularLocation>
        <location evidence="1">Cytoplasm</location>
    </subcellularLocation>
</comment>
<comment type="similarity">
    <text evidence="3">Belongs to the HisA/HisF family.</text>
</comment>
<name>HIS6_THEP3</name>
<dbReference type="EC" id="4.3.2.10"/>
<dbReference type="EMBL" id="AF150930">
    <property type="protein sequence ID" value="AAF05094.1"/>
    <property type="molecule type" value="Genomic_DNA"/>
</dbReference>
<dbReference type="SMR" id="Q9RPQ4"/>
<dbReference type="UniPathway" id="UPA00031">
    <property type="reaction ID" value="UER00010"/>
</dbReference>
<dbReference type="GO" id="GO:0005737">
    <property type="term" value="C:cytoplasm"/>
    <property type="evidence" value="ECO:0007669"/>
    <property type="project" value="UniProtKB-SubCell"/>
</dbReference>
<dbReference type="GO" id="GO:0000107">
    <property type="term" value="F:imidazoleglycerol-phosphate synthase activity"/>
    <property type="evidence" value="ECO:0007669"/>
    <property type="project" value="UniProtKB-UniRule"/>
</dbReference>
<dbReference type="GO" id="GO:0016829">
    <property type="term" value="F:lyase activity"/>
    <property type="evidence" value="ECO:0007669"/>
    <property type="project" value="UniProtKB-KW"/>
</dbReference>
<dbReference type="GO" id="GO:0000105">
    <property type="term" value="P:L-histidine biosynthetic process"/>
    <property type="evidence" value="ECO:0007669"/>
    <property type="project" value="UniProtKB-UniRule"/>
</dbReference>
<dbReference type="CDD" id="cd04731">
    <property type="entry name" value="HisF"/>
    <property type="match status" value="1"/>
</dbReference>
<dbReference type="FunFam" id="3.20.20.70:FF:000006">
    <property type="entry name" value="Imidazole glycerol phosphate synthase subunit HisF"/>
    <property type="match status" value="1"/>
</dbReference>
<dbReference type="Gene3D" id="3.20.20.70">
    <property type="entry name" value="Aldolase class I"/>
    <property type="match status" value="1"/>
</dbReference>
<dbReference type="HAMAP" id="MF_01013">
    <property type="entry name" value="HisF"/>
    <property type="match status" value="1"/>
</dbReference>
<dbReference type="InterPro" id="IPR013785">
    <property type="entry name" value="Aldolase_TIM"/>
</dbReference>
<dbReference type="InterPro" id="IPR006062">
    <property type="entry name" value="His_biosynth"/>
</dbReference>
<dbReference type="InterPro" id="IPR004651">
    <property type="entry name" value="HisF"/>
</dbReference>
<dbReference type="InterPro" id="IPR050064">
    <property type="entry name" value="IGPS_HisA/HisF"/>
</dbReference>
<dbReference type="InterPro" id="IPR011060">
    <property type="entry name" value="RibuloseP-bd_barrel"/>
</dbReference>
<dbReference type="NCBIfam" id="TIGR00735">
    <property type="entry name" value="hisF"/>
    <property type="match status" value="1"/>
</dbReference>
<dbReference type="PANTHER" id="PTHR21235:SF2">
    <property type="entry name" value="IMIDAZOLE GLYCEROL PHOSPHATE SYNTHASE HISHF"/>
    <property type="match status" value="1"/>
</dbReference>
<dbReference type="PANTHER" id="PTHR21235">
    <property type="entry name" value="IMIDAZOLE GLYCEROL PHOSPHATE SYNTHASE SUBUNIT HISF/H IGP SYNTHASE SUBUNIT HISF/H"/>
    <property type="match status" value="1"/>
</dbReference>
<dbReference type="Pfam" id="PF00977">
    <property type="entry name" value="His_biosynth"/>
    <property type="match status" value="1"/>
</dbReference>
<dbReference type="SUPFAM" id="SSF51366">
    <property type="entry name" value="Ribulose-phoshate binding barrel"/>
    <property type="match status" value="1"/>
</dbReference>
<evidence type="ECO:0000250" key="1"/>
<evidence type="ECO:0000255" key="2"/>
<evidence type="ECO:0000305" key="3"/>
<sequence>MVTKRIIPCLDVHNGRVVKGVNFVNIRDAGDPVEIASYYDKAGADELTFLDITASAELRNIMIDVVRRVAEQVFIPFTVGGGIRTVEDFREILKAGADKVSINSAAVKRPELISEAASRFGSQCVVVAIDAKRRDDNSGWDVYINGGRINTGKDAVEWAVEVEKLGAGEILLTSMDCDGTKKGYDIELTRKVSESVRMIPVIASGGAGTMEHFREALVEGKADAVLAASLFHYREIEIMELKKYLKENGIEIRM</sequence>
<proteinExistence type="inferred from homology"/>
<accession>Q9RPQ4</accession>
<keyword id="KW-0028">Amino-acid biosynthesis</keyword>
<keyword id="KW-0963">Cytoplasm</keyword>
<keyword id="KW-0368">Histidine biosynthesis</keyword>
<keyword id="KW-0456">Lyase</keyword>
<feature type="chain" id="PRO_0000142250" description="Imidazole glycerol phosphate synthase subunit HisF">
    <location>
        <begin position="1"/>
        <end position="254"/>
    </location>
</feature>
<feature type="active site" evidence="2">
    <location>
        <position position="11"/>
    </location>
</feature>
<feature type="active site" evidence="2">
    <location>
        <position position="130"/>
    </location>
</feature>
<gene>
    <name type="primary">hisF</name>
</gene>
<protein>
    <recommendedName>
        <fullName>Imidazole glycerol phosphate synthase subunit HisF</fullName>
        <ecNumber>4.3.2.10</ecNumber>
    </recommendedName>
    <alternativeName>
        <fullName>IGP synthase cyclase subunit</fullName>
    </alternativeName>
    <alternativeName>
        <fullName>IGP synthase subunit HisF</fullName>
    </alternativeName>
    <alternativeName>
        <fullName>ImGP synthase subunit HisF</fullName>
        <shortName>IGPS subunit HisF</shortName>
    </alternativeName>
</protein>
<organism>
    <name type="scientific">Thermoanaerobacter pseudethanolicus (strain ATCC 33223 / 39E)</name>
    <name type="common">Clostridium thermohydrosulfuricum</name>
    <dbReference type="NCBI Taxonomy" id="340099"/>
    <lineage>
        <taxon>Bacteria</taxon>
        <taxon>Bacillati</taxon>
        <taxon>Bacillota</taxon>
        <taxon>Clostridia</taxon>
        <taxon>Thermoanaerobacterales</taxon>
        <taxon>Thermoanaerobacteraceae</taxon>
        <taxon>Thermoanaerobacter</taxon>
    </lineage>
</organism>